<organism>
    <name type="scientific">Clostridium botulinum (strain Kyoto / Type A2)</name>
    <dbReference type="NCBI Taxonomy" id="536232"/>
    <lineage>
        <taxon>Bacteria</taxon>
        <taxon>Bacillati</taxon>
        <taxon>Bacillota</taxon>
        <taxon>Clostridia</taxon>
        <taxon>Eubacteriales</taxon>
        <taxon>Clostridiaceae</taxon>
        <taxon>Clostridium</taxon>
    </lineage>
</organism>
<feature type="chain" id="PRO_1000133680" description="DNA replication and repair protein RecF">
    <location>
        <begin position="1"/>
        <end position="364"/>
    </location>
</feature>
<feature type="binding site" evidence="1">
    <location>
        <begin position="30"/>
        <end position="37"/>
    </location>
    <ligand>
        <name>ATP</name>
        <dbReference type="ChEBI" id="CHEBI:30616"/>
    </ligand>
</feature>
<sequence length="364" mass="42641">MYIKNVHLINFRNYDDMYLELSPNTNIFVGNNAQGKTNILESIYYSSIGKSHRTNKDKDLIKWDKNNTYLRTYVSRERLDKTIDINIFKNGKKAITVNKIKIKKISELMGNLNVVMFSPEDLRIIKDSPGNRRKFLDIELCKINNVYYHDLVQYNKILSERNTALKNWNNKINDIIDIYDEQLSKYGAFIIKERNKYLDKLNIIGKNIHKKITNDLEDINFRYLTNIKDFDNAEKELLIVLKKNRKKDLERNSTSIGPHRDDFEVSINNIDTRIFGSQGQQRTAVLTLKFASLEIIKNIIGEYPVLLLDDVLSELDSNRQKFVLNSIDKIQTIITCTGIEEIDKYLDKKQSQLYLVNNGKIKRV</sequence>
<proteinExistence type="inferred from homology"/>
<keyword id="KW-0067">ATP-binding</keyword>
<keyword id="KW-0963">Cytoplasm</keyword>
<keyword id="KW-0227">DNA damage</keyword>
<keyword id="KW-0234">DNA repair</keyword>
<keyword id="KW-0235">DNA replication</keyword>
<keyword id="KW-0238">DNA-binding</keyword>
<keyword id="KW-0547">Nucleotide-binding</keyword>
<keyword id="KW-0742">SOS response</keyword>
<evidence type="ECO:0000255" key="1">
    <source>
        <dbReference type="HAMAP-Rule" id="MF_00365"/>
    </source>
</evidence>
<gene>
    <name evidence="1" type="primary">recF</name>
    <name type="ordered locus">CLM_0004</name>
</gene>
<reference key="1">
    <citation type="submission" date="2008-10" db="EMBL/GenBank/DDBJ databases">
        <title>Genome sequence of Clostridium botulinum A2 Kyoto.</title>
        <authorList>
            <person name="Shrivastava S."/>
            <person name="Brinkac L.M."/>
            <person name="Brown J.L."/>
            <person name="Bruce D."/>
            <person name="Detter C.C."/>
            <person name="Johnson E.A."/>
            <person name="Munk C.A."/>
            <person name="Smith L.A."/>
            <person name="Smith T.J."/>
            <person name="Sutton G."/>
            <person name="Brettin T.S."/>
        </authorList>
    </citation>
    <scope>NUCLEOTIDE SEQUENCE [LARGE SCALE GENOMIC DNA]</scope>
    <source>
        <strain>Kyoto / Type A2</strain>
    </source>
</reference>
<dbReference type="EMBL" id="CP001581">
    <property type="protein sequence ID" value="ACO84993.1"/>
    <property type="molecule type" value="Genomic_DNA"/>
</dbReference>
<dbReference type="RefSeq" id="WP_003359456.1">
    <property type="nucleotide sequence ID" value="NC_012563.1"/>
</dbReference>
<dbReference type="SMR" id="C1FPH6"/>
<dbReference type="GeneID" id="5184259"/>
<dbReference type="KEGG" id="cby:CLM_0004"/>
<dbReference type="eggNOG" id="COG1195">
    <property type="taxonomic scope" value="Bacteria"/>
</dbReference>
<dbReference type="HOGENOM" id="CLU_040267_0_1_9"/>
<dbReference type="Proteomes" id="UP000001374">
    <property type="component" value="Chromosome"/>
</dbReference>
<dbReference type="GO" id="GO:0005737">
    <property type="term" value="C:cytoplasm"/>
    <property type="evidence" value="ECO:0007669"/>
    <property type="project" value="UniProtKB-SubCell"/>
</dbReference>
<dbReference type="GO" id="GO:0005524">
    <property type="term" value="F:ATP binding"/>
    <property type="evidence" value="ECO:0007669"/>
    <property type="project" value="UniProtKB-UniRule"/>
</dbReference>
<dbReference type="GO" id="GO:0003697">
    <property type="term" value="F:single-stranded DNA binding"/>
    <property type="evidence" value="ECO:0007669"/>
    <property type="project" value="UniProtKB-UniRule"/>
</dbReference>
<dbReference type="GO" id="GO:0006260">
    <property type="term" value="P:DNA replication"/>
    <property type="evidence" value="ECO:0007669"/>
    <property type="project" value="UniProtKB-UniRule"/>
</dbReference>
<dbReference type="GO" id="GO:0000731">
    <property type="term" value="P:DNA synthesis involved in DNA repair"/>
    <property type="evidence" value="ECO:0007669"/>
    <property type="project" value="TreeGrafter"/>
</dbReference>
<dbReference type="GO" id="GO:0006302">
    <property type="term" value="P:double-strand break repair"/>
    <property type="evidence" value="ECO:0007669"/>
    <property type="project" value="TreeGrafter"/>
</dbReference>
<dbReference type="GO" id="GO:0009432">
    <property type="term" value="P:SOS response"/>
    <property type="evidence" value="ECO:0007669"/>
    <property type="project" value="UniProtKB-UniRule"/>
</dbReference>
<dbReference type="CDD" id="cd03242">
    <property type="entry name" value="ABC_RecF"/>
    <property type="match status" value="1"/>
</dbReference>
<dbReference type="Gene3D" id="3.40.50.300">
    <property type="entry name" value="P-loop containing nucleotide triphosphate hydrolases"/>
    <property type="match status" value="1"/>
</dbReference>
<dbReference type="Gene3D" id="1.20.1050.90">
    <property type="entry name" value="RecF/RecN/SMC, N-terminal domain"/>
    <property type="match status" value="1"/>
</dbReference>
<dbReference type="HAMAP" id="MF_00365">
    <property type="entry name" value="RecF"/>
    <property type="match status" value="1"/>
</dbReference>
<dbReference type="InterPro" id="IPR001238">
    <property type="entry name" value="DNA-binding_RecF"/>
</dbReference>
<dbReference type="InterPro" id="IPR018078">
    <property type="entry name" value="DNA-binding_RecF_CS"/>
</dbReference>
<dbReference type="InterPro" id="IPR027417">
    <property type="entry name" value="P-loop_NTPase"/>
</dbReference>
<dbReference type="InterPro" id="IPR003395">
    <property type="entry name" value="RecF/RecN/SMC_N"/>
</dbReference>
<dbReference type="InterPro" id="IPR042174">
    <property type="entry name" value="RecF_2"/>
</dbReference>
<dbReference type="NCBIfam" id="TIGR00611">
    <property type="entry name" value="recf"/>
    <property type="match status" value="1"/>
</dbReference>
<dbReference type="PANTHER" id="PTHR32182">
    <property type="entry name" value="DNA REPLICATION AND REPAIR PROTEIN RECF"/>
    <property type="match status" value="1"/>
</dbReference>
<dbReference type="PANTHER" id="PTHR32182:SF0">
    <property type="entry name" value="DNA REPLICATION AND REPAIR PROTEIN RECF"/>
    <property type="match status" value="1"/>
</dbReference>
<dbReference type="Pfam" id="PF02463">
    <property type="entry name" value="SMC_N"/>
    <property type="match status" value="1"/>
</dbReference>
<dbReference type="SUPFAM" id="SSF52540">
    <property type="entry name" value="P-loop containing nucleoside triphosphate hydrolases"/>
    <property type="match status" value="1"/>
</dbReference>
<dbReference type="PROSITE" id="PS00617">
    <property type="entry name" value="RECF_1"/>
    <property type="match status" value="1"/>
</dbReference>
<dbReference type="PROSITE" id="PS00618">
    <property type="entry name" value="RECF_2"/>
    <property type="match status" value="1"/>
</dbReference>
<accession>C1FPH6</accession>
<protein>
    <recommendedName>
        <fullName evidence="1">DNA replication and repair protein RecF</fullName>
    </recommendedName>
</protein>
<comment type="function">
    <text evidence="1">The RecF protein is involved in DNA metabolism; it is required for DNA replication and normal SOS inducibility. RecF binds preferentially to single-stranded, linear DNA. It also seems to bind ATP.</text>
</comment>
<comment type="subcellular location">
    <subcellularLocation>
        <location evidence="1">Cytoplasm</location>
    </subcellularLocation>
</comment>
<comment type="similarity">
    <text evidence="1">Belongs to the RecF family.</text>
</comment>
<name>RECF_CLOBJ</name>